<reference key="1">
    <citation type="submission" date="2008-06" db="EMBL/GenBank/DDBJ databases">
        <title>Genome and proteome analysis of A. pleuropneumoniae serotype 7.</title>
        <authorList>
            <person name="Linke B."/>
            <person name="Buettner F."/>
            <person name="Martinez-Arias R."/>
            <person name="Goesmann A."/>
            <person name="Baltes N."/>
            <person name="Tegetmeyer H."/>
            <person name="Singh M."/>
            <person name="Gerlach G.F."/>
        </authorList>
    </citation>
    <scope>NUCLEOTIDE SEQUENCE [LARGE SCALE GENOMIC DNA]</scope>
    <source>
        <strain>AP76</strain>
    </source>
</reference>
<feature type="chain" id="PRO_1000097371" description="Thymidylate kinase">
    <location>
        <begin position="1"/>
        <end position="208"/>
    </location>
</feature>
<feature type="binding site" evidence="1">
    <location>
        <begin position="10"/>
        <end position="17"/>
    </location>
    <ligand>
        <name>ATP</name>
        <dbReference type="ChEBI" id="CHEBI:30616"/>
    </ligand>
</feature>
<protein>
    <recommendedName>
        <fullName evidence="1">Thymidylate kinase</fullName>
        <ecNumber evidence="1">2.7.4.9</ecNumber>
    </recommendedName>
    <alternativeName>
        <fullName evidence="1">dTMP kinase</fullName>
    </alternativeName>
</protein>
<gene>
    <name evidence="1" type="primary">tmk</name>
    <name type="ordered locus">APP7_1903</name>
</gene>
<organism>
    <name type="scientific">Actinobacillus pleuropneumoniae serotype 7 (strain AP76)</name>
    <dbReference type="NCBI Taxonomy" id="537457"/>
    <lineage>
        <taxon>Bacteria</taxon>
        <taxon>Pseudomonadati</taxon>
        <taxon>Pseudomonadota</taxon>
        <taxon>Gammaproteobacteria</taxon>
        <taxon>Pasteurellales</taxon>
        <taxon>Pasteurellaceae</taxon>
        <taxon>Actinobacillus</taxon>
    </lineage>
</organism>
<comment type="function">
    <text evidence="1">Phosphorylation of dTMP to form dTDP in both de novo and salvage pathways of dTTP synthesis.</text>
</comment>
<comment type="catalytic activity">
    <reaction evidence="1">
        <text>dTMP + ATP = dTDP + ADP</text>
        <dbReference type="Rhea" id="RHEA:13517"/>
        <dbReference type="ChEBI" id="CHEBI:30616"/>
        <dbReference type="ChEBI" id="CHEBI:58369"/>
        <dbReference type="ChEBI" id="CHEBI:63528"/>
        <dbReference type="ChEBI" id="CHEBI:456216"/>
        <dbReference type="EC" id="2.7.4.9"/>
    </reaction>
</comment>
<comment type="similarity">
    <text evidence="1">Belongs to the thymidylate kinase family.</text>
</comment>
<accession>B3GZ69</accession>
<keyword id="KW-0067">ATP-binding</keyword>
<keyword id="KW-0418">Kinase</keyword>
<keyword id="KW-0545">Nucleotide biosynthesis</keyword>
<keyword id="KW-0547">Nucleotide-binding</keyword>
<keyword id="KW-0808">Transferase</keyword>
<dbReference type="EC" id="2.7.4.9" evidence="1"/>
<dbReference type="EMBL" id="CP001091">
    <property type="protein sequence ID" value="ACE62555.1"/>
    <property type="molecule type" value="Genomic_DNA"/>
</dbReference>
<dbReference type="RefSeq" id="WP_005599398.1">
    <property type="nucleotide sequence ID" value="NC_010939.1"/>
</dbReference>
<dbReference type="SMR" id="B3GZ69"/>
<dbReference type="GeneID" id="48600109"/>
<dbReference type="KEGG" id="apa:APP7_1903"/>
<dbReference type="HOGENOM" id="CLU_049131_0_1_6"/>
<dbReference type="Proteomes" id="UP000001226">
    <property type="component" value="Chromosome"/>
</dbReference>
<dbReference type="GO" id="GO:0005829">
    <property type="term" value="C:cytosol"/>
    <property type="evidence" value="ECO:0007669"/>
    <property type="project" value="TreeGrafter"/>
</dbReference>
<dbReference type="GO" id="GO:0005524">
    <property type="term" value="F:ATP binding"/>
    <property type="evidence" value="ECO:0007669"/>
    <property type="project" value="UniProtKB-UniRule"/>
</dbReference>
<dbReference type="GO" id="GO:0004798">
    <property type="term" value="F:dTMP kinase activity"/>
    <property type="evidence" value="ECO:0007669"/>
    <property type="project" value="UniProtKB-UniRule"/>
</dbReference>
<dbReference type="GO" id="GO:0006233">
    <property type="term" value="P:dTDP biosynthetic process"/>
    <property type="evidence" value="ECO:0007669"/>
    <property type="project" value="InterPro"/>
</dbReference>
<dbReference type="GO" id="GO:0006235">
    <property type="term" value="P:dTTP biosynthetic process"/>
    <property type="evidence" value="ECO:0007669"/>
    <property type="project" value="UniProtKB-UniRule"/>
</dbReference>
<dbReference type="GO" id="GO:0006227">
    <property type="term" value="P:dUDP biosynthetic process"/>
    <property type="evidence" value="ECO:0007669"/>
    <property type="project" value="TreeGrafter"/>
</dbReference>
<dbReference type="CDD" id="cd01672">
    <property type="entry name" value="TMPK"/>
    <property type="match status" value="1"/>
</dbReference>
<dbReference type="FunFam" id="3.40.50.300:FF:000321">
    <property type="entry name" value="Thymidylate kinase"/>
    <property type="match status" value="1"/>
</dbReference>
<dbReference type="Gene3D" id="3.40.50.300">
    <property type="entry name" value="P-loop containing nucleotide triphosphate hydrolases"/>
    <property type="match status" value="1"/>
</dbReference>
<dbReference type="HAMAP" id="MF_00165">
    <property type="entry name" value="Thymidylate_kinase"/>
    <property type="match status" value="1"/>
</dbReference>
<dbReference type="InterPro" id="IPR027417">
    <property type="entry name" value="P-loop_NTPase"/>
</dbReference>
<dbReference type="InterPro" id="IPR039430">
    <property type="entry name" value="Thymidylate_kin-like_dom"/>
</dbReference>
<dbReference type="InterPro" id="IPR018095">
    <property type="entry name" value="Thymidylate_kin_CS"/>
</dbReference>
<dbReference type="InterPro" id="IPR018094">
    <property type="entry name" value="Thymidylate_kinase"/>
</dbReference>
<dbReference type="NCBIfam" id="TIGR00041">
    <property type="entry name" value="DTMP_kinase"/>
    <property type="match status" value="1"/>
</dbReference>
<dbReference type="PANTHER" id="PTHR10344">
    <property type="entry name" value="THYMIDYLATE KINASE"/>
    <property type="match status" value="1"/>
</dbReference>
<dbReference type="PANTHER" id="PTHR10344:SF4">
    <property type="entry name" value="UMP-CMP KINASE 2, MITOCHONDRIAL"/>
    <property type="match status" value="1"/>
</dbReference>
<dbReference type="Pfam" id="PF02223">
    <property type="entry name" value="Thymidylate_kin"/>
    <property type="match status" value="1"/>
</dbReference>
<dbReference type="SUPFAM" id="SSF52540">
    <property type="entry name" value="P-loop containing nucleoside triphosphate hydrolases"/>
    <property type="match status" value="1"/>
</dbReference>
<dbReference type="PROSITE" id="PS01331">
    <property type="entry name" value="THYMIDYLATE_KINASE"/>
    <property type="match status" value="1"/>
</dbReference>
<proteinExistence type="inferred from homology"/>
<name>KTHY_ACTP7</name>
<evidence type="ECO:0000255" key="1">
    <source>
        <dbReference type="HAMAP-Rule" id="MF_00165"/>
    </source>
</evidence>
<sequence>MRGKFIVLEGLEGAGKTTAHQVILAQLEKAGKNVVQTREPGGTPLAEKLRHLIKHETEEAVSDKAELLMLYAARIQLVENVIKPALAEGKWVLGDRHDMSSQAYQGGGRQIDRHLLETLKETVLGNFEPDLTIYLDIDPAVGLARARGRGELDRIEQQSLDFFYRTRQRYLELTQNNEKAVIINAEQSIEQVAADIQQAVENFLKIAK</sequence>